<keyword id="KW-0067">ATP-binding</keyword>
<keyword id="KW-0143">Chaperone</keyword>
<keyword id="KW-0479">Metal-binding</keyword>
<keyword id="KW-0547">Nucleotide-binding</keyword>
<keyword id="KW-0862">Zinc</keyword>
<name>CLPX_MYCLB</name>
<comment type="function">
    <text evidence="1">ATP-dependent specificity component of the Clp protease. It directs the protease to specific substrates. Can perform chaperone functions in the absence of ClpP.</text>
</comment>
<comment type="subunit">
    <text evidence="1">Component of the ClpX-ClpP complex. Forms a hexameric ring that, in the presence of ATP, binds to fourteen ClpP subunits assembled into a disk-like structure with a central cavity, resembling the structure of eukaryotic proteasomes.</text>
</comment>
<comment type="similarity">
    <text evidence="1">Belongs to the ClpX chaperone family.</text>
</comment>
<protein>
    <recommendedName>
        <fullName evidence="1">ATP-dependent Clp protease ATP-binding subunit ClpX</fullName>
    </recommendedName>
</protein>
<organism>
    <name type="scientific">Mycobacterium leprae (strain Br4923)</name>
    <dbReference type="NCBI Taxonomy" id="561304"/>
    <lineage>
        <taxon>Bacteria</taxon>
        <taxon>Bacillati</taxon>
        <taxon>Actinomycetota</taxon>
        <taxon>Actinomycetes</taxon>
        <taxon>Mycobacteriales</taxon>
        <taxon>Mycobacteriaceae</taxon>
        <taxon>Mycobacterium</taxon>
    </lineage>
</organism>
<evidence type="ECO:0000255" key="1">
    <source>
        <dbReference type="HAMAP-Rule" id="MF_00175"/>
    </source>
</evidence>
<evidence type="ECO:0000255" key="2">
    <source>
        <dbReference type="PROSITE-ProRule" id="PRU01250"/>
    </source>
</evidence>
<dbReference type="EMBL" id="FM211192">
    <property type="protein sequence ID" value="CAR71571.1"/>
    <property type="molecule type" value="Genomic_DNA"/>
</dbReference>
<dbReference type="SMR" id="B8ZRP1"/>
<dbReference type="KEGG" id="mlb:MLBr01477"/>
<dbReference type="HOGENOM" id="CLU_014218_8_2_11"/>
<dbReference type="Proteomes" id="UP000006900">
    <property type="component" value="Chromosome"/>
</dbReference>
<dbReference type="GO" id="GO:0009376">
    <property type="term" value="C:HslUV protease complex"/>
    <property type="evidence" value="ECO:0007669"/>
    <property type="project" value="TreeGrafter"/>
</dbReference>
<dbReference type="GO" id="GO:0005524">
    <property type="term" value="F:ATP binding"/>
    <property type="evidence" value="ECO:0007669"/>
    <property type="project" value="UniProtKB-UniRule"/>
</dbReference>
<dbReference type="GO" id="GO:0016887">
    <property type="term" value="F:ATP hydrolysis activity"/>
    <property type="evidence" value="ECO:0007669"/>
    <property type="project" value="InterPro"/>
</dbReference>
<dbReference type="GO" id="GO:0140662">
    <property type="term" value="F:ATP-dependent protein folding chaperone"/>
    <property type="evidence" value="ECO:0007669"/>
    <property type="project" value="InterPro"/>
</dbReference>
<dbReference type="GO" id="GO:0046983">
    <property type="term" value="F:protein dimerization activity"/>
    <property type="evidence" value="ECO:0007669"/>
    <property type="project" value="InterPro"/>
</dbReference>
<dbReference type="GO" id="GO:0051082">
    <property type="term" value="F:unfolded protein binding"/>
    <property type="evidence" value="ECO:0007669"/>
    <property type="project" value="UniProtKB-UniRule"/>
</dbReference>
<dbReference type="GO" id="GO:0008270">
    <property type="term" value="F:zinc ion binding"/>
    <property type="evidence" value="ECO:0007669"/>
    <property type="project" value="InterPro"/>
</dbReference>
<dbReference type="GO" id="GO:0051301">
    <property type="term" value="P:cell division"/>
    <property type="evidence" value="ECO:0007669"/>
    <property type="project" value="TreeGrafter"/>
</dbReference>
<dbReference type="GO" id="GO:0051603">
    <property type="term" value="P:proteolysis involved in protein catabolic process"/>
    <property type="evidence" value="ECO:0007669"/>
    <property type="project" value="TreeGrafter"/>
</dbReference>
<dbReference type="CDD" id="cd19497">
    <property type="entry name" value="RecA-like_ClpX"/>
    <property type="match status" value="1"/>
</dbReference>
<dbReference type="FunFam" id="1.10.8.60:FF:000002">
    <property type="entry name" value="ATP-dependent Clp protease ATP-binding subunit ClpX"/>
    <property type="match status" value="1"/>
</dbReference>
<dbReference type="FunFam" id="3.40.50.300:FF:000005">
    <property type="entry name" value="ATP-dependent Clp protease ATP-binding subunit ClpX"/>
    <property type="match status" value="1"/>
</dbReference>
<dbReference type="Gene3D" id="1.10.8.60">
    <property type="match status" value="1"/>
</dbReference>
<dbReference type="Gene3D" id="6.20.220.10">
    <property type="entry name" value="ClpX chaperone, C4-type zinc finger domain"/>
    <property type="match status" value="1"/>
</dbReference>
<dbReference type="Gene3D" id="3.40.50.300">
    <property type="entry name" value="P-loop containing nucleotide triphosphate hydrolases"/>
    <property type="match status" value="1"/>
</dbReference>
<dbReference type="HAMAP" id="MF_00175">
    <property type="entry name" value="ClpX"/>
    <property type="match status" value="1"/>
</dbReference>
<dbReference type="InterPro" id="IPR003593">
    <property type="entry name" value="AAA+_ATPase"/>
</dbReference>
<dbReference type="InterPro" id="IPR050052">
    <property type="entry name" value="ATP-dep_Clp_protease_ClpX"/>
</dbReference>
<dbReference type="InterPro" id="IPR003959">
    <property type="entry name" value="ATPase_AAA_core"/>
</dbReference>
<dbReference type="InterPro" id="IPR019489">
    <property type="entry name" value="Clp_ATPase_C"/>
</dbReference>
<dbReference type="InterPro" id="IPR004487">
    <property type="entry name" value="Clp_protease_ATP-bd_su_ClpX"/>
</dbReference>
<dbReference type="InterPro" id="IPR046425">
    <property type="entry name" value="ClpX_bact"/>
</dbReference>
<dbReference type="InterPro" id="IPR027417">
    <property type="entry name" value="P-loop_NTPase"/>
</dbReference>
<dbReference type="InterPro" id="IPR010603">
    <property type="entry name" value="Znf_CppX_C4"/>
</dbReference>
<dbReference type="InterPro" id="IPR038366">
    <property type="entry name" value="Znf_CppX_C4_sf"/>
</dbReference>
<dbReference type="NCBIfam" id="TIGR00382">
    <property type="entry name" value="clpX"/>
    <property type="match status" value="1"/>
</dbReference>
<dbReference type="NCBIfam" id="NF003745">
    <property type="entry name" value="PRK05342.1"/>
    <property type="match status" value="1"/>
</dbReference>
<dbReference type="PANTHER" id="PTHR48102:SF7">
    <property type="entry name" value="ATP-DEPENDENT CLP PROTEASE ATP-BINDING SUBUNIT CLPX-LIKE, MITOCHONDRIAL"/>
    <property type="match status" value="1"/>
</dbReference>
<dbReference type="PANTHER" id="PTHR48102">
    <property type="entry name" value="ATP-DEPENDENT CLP PROTEASE ATP-BINDING SUBUNIT CLPX-LIKE, MITOCHONDRIAL-RELATED"/>
    <property type="match status" value="1"/>
</dbReference>
<dbReference type="Pfam" id="PF07724">
    <property type="entry name" value="AAA_2"/>
    <property type="match status" value="1"/>
</dbReference>
<dbReference type="Pfam" id="PF10431">
    <property type="entry name" value="ClpB_D2-small"/>
    <property type="match status" value="1"/>
</dbReference>
<dbReference type="Pfam" id="PF06689">
    <property type="entry name" value="zf-C4_ClpX"/>
    <property type="match status" value="1"/>
</dbReference>
<dbReference type="SMART" id="SM00382">
    <property type="entry name" value="AAA"/>
    <property type="match status" value="1"/>
</dbReference>
<dbReference type="SMART" id="SM01086">
    <property type="entry name" value="ClpB_D2-small"/>
    <property type="match status" value="1"/>
</dbReference>
<dbReference type="SMART" id="SM00994">
    <property type="entry name" value="zf-C4_ClpX"/>
    <property type="match status" value="1"/>
</dbReference>
<dbReference type="SUPFAM" id="SSF57716">
    <property type="entry name" value="Glucocorticoid receptor-like (DNA-binding domain)"/>
    <property type="match status" value="1"/>
</dbReference>
<dbReference type="SUPFAM" id="SSF52540">
    <property type="entry name" value="P-loop containing nucleoside triphosphate hydrolases"/>
    <property type="match status" value="1"/>
</dbReference>
<dbReference type="PROSITE" id="PS51902">
    <property type="entry name" value="CLPX_ZB"/>
    <property type="match status" value="1"/>
</dbReference>
<sequence>MARIGDSGDLLKCSFCGKSQTQVKKLIAGPGVYICDECIDLCNEIIEEELADADDVQLDELPKPVEIREFLEGYVIGQDTAKRTLAVAVYNHYKRIQAGEKGRDSKREPVELAKSNILMLGPTGCGKTYLAQTLAKMLNVPFAIADATALTEAGYVGEDVENILLKLIQAADYDVKRAETGIIYIDEVDKIARKSENPSITRDVSGEGVQQALLKILEGTQASVPPQGGRKHPHQEFIQIDTTNVLFIVAGAFAGLDKIIYERIGKRGLGFGAEVRSKAEIDTTDHFADVMPEDLIKFGLIPEFIGRLPVIASVINLDMESLVKILSEPKNALVKQYTWLFEMDGVELEFTNDALEAVADQAIHRGTGARGLRAIMEEVLLPVMYDIPSRDDVAKVVVTKETVQDNVLPTIVPRKPSRTERRDKSA</sequence>
<gene>
    <name evidence="1" type="primary">clpX</name>
    <name type="ordered locus">MLBr01477</name>
</gene>
<accession>B8ZRP1</accession>
<feature type="chain" id="PRO_1000123844" description="ATP-dependent Clp protease ATP-binding subunit ClpX">
    <location>
        <begin position="1"/>
        <end position="426"/>
    </location>
</feature>
<feature type="domain" description="ClpX-type ZB" evidence="2">
    <location>
        <begin position="1"/>
        <end position="54"/>
    </location>
</feature>
<feature type="binding site" evidence="2">
    <location>
        <position position="13"/>
    </location>
    <ligand>
        <name>Zn(2+)</name>
        <dbReference type="ChEBI" id="CHEBI:29105"/>
    </ligand>
</feature>
<feature type="binding site" evidence="2">
    <location>
        <position position="16"/>
    </location>
    <ligand>
        <name>Zn(2+)</name>
        <dbReference type="ChEBI" id="CHEBI:29105"/>
    </ligand>
</feature>
<feature type="binding site" evidence="2">
    <location>
        <position position="35"/>
    </location>
    <ligand>
        <name>Zn(2+)</name>
        <dbReference type="ChEBI" id="CHEBI:29105"/>
    </ligand>
</feature>
<feature type="binding site" evidence="2">
    <location>
        <position position="38"/>
    </location>
    <ligand>
        <name>Zn(2+)</name>
        <dbReference type="ChEBI" id="CHEBI:29105"/>
    </ligand>
</feature>
<feature type="binding site" evidence="1">
    <location>
        <begin position="122"/>
        <end position="129"/>
    </location>
    <ligand>
        <name>ATP</name>
        <dbReference type="ChEBI" id="CHEBI:30616"/>
    </ligand>
</feature>
<reference key="1">
    <citation type="journal article" date="2009" name="Nat. Genet.">
        <title>Comparative genomic and phylogeographic analysis of Mycobacterium leprae.</title>
        <authorList>
            <person name="Monot M."/>
            <person name="Honore N."/>
            <person name="Garnier T."/>
            <person name="Zidane N."/>
            <person name="Sherafi D."/>
            <person name="Paniz-Mondolfi A."/>
            <person name="Matsuoka M."/>
            <person name="Taylor G.M."/>
            <person name="Donoghue H.D."/>
            <person name="Bouwman A."/>
            <person name="Mays S."/>
            <person name="Watson C."/>
            <person name="Lockwood D."/>
            <person name="Khamispour A."/>
            <person name="Dowlati Y."/>
            <person name="Jianping S."/>
            <person name="Rea T.H."/>
            <person name="Vera-Cabrera L."/>
            <person name="Stefani M.M."/>
            <person name="Banu S."/>
            <person name="Macdonald M."/>
            <person name="Sapkota B.R."/>
            <person name="Spencer J.S."/>
            <person name="Thomas J."/>
            <person name="Harshman K."/>
            <person name="Singh P."/>
            <person name="Busso P."/>
            <person name="Gattiker A."/>
            <person name="Rougemont J."/>
            <person name="Brennan P.J."/>
            <person name="Cole S.T."/>
        </authorList>
    </citation>
    <scope>NUCLEOTIDE SEQUENCE [LARGE SCALE GENOMIC DNA]</scope>
    <source>
        <strain>Br4923</strain>
    </source>
</reference>
<proteinExistence type="inferred from homology"/>